<accession>C1A0L2</accession>
<gene>
    <name evidence="1" type="primary">hisI</name>
    <name type="ordered locus">RER_34390</name>
</gene>
<comment type="function">
    <text evidence="1">Catalyzes the hydrolysis of the adenine ring of phosphoribosyl-AMP.</text>
</comment>
<comment type="catalytic activity">
    <reaction evidence="1">
        <text>1-(5-phospho-beta-D-ribosyl)-5'-AMP + H2O = 1-(5-phospho-beta-D-ribosyl)-5-[(5-phospho-beta-D-ribosylamino)methylideneamino]imidazole-4-carboxamide</text>
        <dbReference type="Rhea" id="RHEA:20049"/>
        <dbReference type="ChEBI" id="CHEBI:15377"/>
        <dbReference type="ChEBI" id="CHEBI:58435"/>
        <dbReference type="ChEBI" id="CHEBI:59457"/>
        <dbReference type="EC" id="3.5.4.19"/>
    </reaction>
</comment>
<comment type="cofactor">
    <cofactor evidence="1">
        <name>Mg(2+)</name>
        <dbReference type="ChEBI" id="CHEBI:18420"/>
    </cofactor>
    <text evidence="1">Binds 1 Mg(2+) ion per subunit.</text>
</comment>
<comment type="cofactor">
    <cofactor evidence="1">
        <name>Zn(2+)</name>
        <dbReference type="ChEBI" id="CHEBI:29105"/>
    </cofactor>
    <text evidence="1">Binds 1 zinc ion per subunit.</text>
</comment>
<comment type="pathway">
    <text evidence="1">Amino-acid biosynthesis; L-histidine biosynthesis; L-histidine from 5-phospho-alpha-D-ribose 1-diphosphate: step 3/9.</text>
</comment>
<comment type="subunit">
    <text evidence="1">Homodimer.</text>
</comment>
<comment type="subcellular location">
    <subcellularLocation>
        <location evidence="1">Cytoplasm</location>
    </subcellularLocation>
</comment>
<comment type="similarity">
    <text evidence="1">Belongs to the PRA-CH family.</text>
</comment>
<evidence type="ECO:0000255" key="1">
    <source>
        <dbReference type="HAMAP-Rule" id="MF_01021"/>
    </source>
</evidence>
<organism>
    <name type="scientific">Rhodococcus erythropolis (strain PR4 / NBRC 100887)</name>
    <dbReference type="NCBI Taxonomy" id="234621"/>
    <lineage>
        <taxon>Bacteria</taxon>
        <taxon>Bacillati</taxon>
        <taxon>Actinomycetota</taxon>
        <taxon>Actinomycetes</taxon>
        <taxon>Mycobacteriales</taxon>
        <taxon>Nocardiaceae</taxon>
        <taxon>Rhodococcus</taxon>
        <taxon>Rhodococcus erythropolis group</taxon>
    </lineage>
</organism>
<protein>
    <recommendedName>
        <fullName evidence="1">Phosphoribosyl-AMP cyclohydrolase</fullName>
        <shortName evidence="1">PRA-CH</shortName>
        <ecNumber evidence="1">3.5.4.19</ecNumber>
    </recommendedName>
</protein>
<dbReference type="EC" id="3.5.4.19" evidence="1"/>
<dbReference type="EMBL" id="AP008957">
    <property type="protein sequence ID" value="BAH34147.1"/>
    <property type="molecule type" value="Genomic_DNA"/>
</dbReference>
<dbReference type="RefSeq" id="WP_003942390.1">
    <property type="nucleotide sequence ID" value="NC_012490.1"/>
</dbReference>
<dbReference type="SMR" id="C1A0L2"/>
<dbReference type="GeneID" id="64141227"/>
<dbReference type="KEGG" id="rer:RER_34390"/>
<dbReference type="eggNOG" id="COG0139">
    <property type="taxonomic scope" value="Bacteria"/>
</dbReference>
<dbReference type="HOGENOM" id="CLU_048577_5_1_11"/>
<dbReference type="UniPathway" id="UPA00031">
    <property type="reaction ID" value="UER00008"/>
</dbReference>
<dbReference type="Proteomes" id="UP000002204">
    <property type="component" value="Chromosome"/>
</dbReference>
<dbReference type="GO" id="GO:0005737">
    <property type="term" value="C:cytoplasm"/>
    <property type="evidence" value="ECO:0007669"/>
    <property type="project" value="UniProtKB-SubCell"/>
</dbReference>
<dbReference type="GO" id="GO:0000287">
    <property type="term" value="F:magnesium ion binding"/>
    <property type="evidence" value="ECO:0007669"/>
    <property type="project" value="UniProtKB-UniRule"/>
</dbReference>
<dbReference type="GO" id="GO:0004635">
    <property type="term" value="F:phosphoribosyl-AMP cyclohydrolase activity"/>
    <property type="evidence" value="ECO:0007669"/>
    <property type="project" value="UniProtKB-UniRule"/>
</dbReference>
<dbReference type="GO" id="GO:0008270">
    <property type="term" value="F:zinc ion binding"/>
    <property type="evidence" value="ECO:0007669"/>
    <property type="project" value="UniProtKB-UniRule"/>
</dbReference>
<dbReference type="GO" id="GO:0000105">
    <property type="term" value="P:L-histidine biosynthetic process"/>
    <property type="evidence" value="ECO:0007669"/>
    <property type="project" value="UniProtKB-UniRule"/>
</dbReference>
<dbReference type="FunFam" id="3.10.20.810:FF:000001">
    <property type="entry name" value="Histidine biosynthesis bifunctional protein HisIE"/>
    <property type="match status" value="1"/>
</dbReference>
<dbReference type="Gene3D" id="3.10.20.810">
    <property type="entry name" value="Phosphoribosyl-AMP cyclohydrolase"/>
    <property type="match status" value="1"/>
</dbReference>
<dbReference type="HAMAP" id="MF_01021">
    <property type="entry name" value="HisI"/>
    <property type="match status" value="1"/>
</dbReference>
<dbReference type="InterPro" id="IPR026660">
    <property type="entry name" value="PRA-CH"/>
</dbReference>
<dbReference type="InterPro" id="IPR002496">
    <property type="entry name" value="PRib_AMP_CycHydrolase_dom"/>
</dbReference>
<dbReference type="InterPro" id="IPR038019">
    <property type="entry name" value="PRib_AMP_CycHydrolase_sf"/>
</dbReference>
<dbReference type="NCBIfam" id="NF000768">
    <property type="entry name" value="PRK00051.1"/>
    <property type="match status" value="1"/>
</dbReference>
<dbReference type="PANTHER" id="PTHR42945">
    <property type="entry name" value="HISTIDINE BIOSYNTHESIS BIFUNCTIONAL PROTEIN"/>
    <property type="match status" value="1"/>
</dbReference>
<dbReference type="PANTHER" id="PTHR42945:SF11">
    <property type="entry name" value="PHOSPHORIBOSYL-AMP CYCLOHYDROLASE"/>
    <property type="match status" value="1"/>
</dbReference>
<dbReference type="Pfam" id="PF01502">
    <property type="entry name" value="PRA-CH"/>
    <property type="match status" value="1"/>
</dbReference>
<dbReference type="SUPFAM" id="SSF141734">
    <property type="entry name" value="HisI-like"/>
    <property type="match status" value="1"/>
</dbReference>
<proteinExistence type="inferred from homology"/>
<keyword id="KW-0028">Amino-acid biosynthesis</keyword>
<keyword id="KW-0963">Cytoplasm</keyword>
<keyword id="KW-0368">Histidine biosynthesis</keyword>
<keyword id="KW-0378">Hydrolase</keyword>
<keyword id="KW-0460">Magnesium</keyword>
<keyword id="KW-0479">Metal-binding</keyword>
<keyword id="KW-0862">Zinc</keyword>
<name>HIS3_RHOE4</name>
<reference key="1">
    <citation type="submission" date="2005-03" db="EMBL/GenBank/DDBJ databases">
        <title>Comparison of the complete genome sequences of Rhodococcus erythropolis PR4 and Rhodococcus opacus B4.</title>
        <authorList>
            <person name="Takarada H."/>
            <person name="Sekine M."/>
            <person name="Hosoyama A."/>
            <person name="Yamada R."/>
            <person name="Fujisawa T."/>
            <person name="Omata S."/>
            <person name="Shimizu A."/>
            <person name="Tsukatani N."/>
            <person name="Tanikawa S."/>
            <person name="Fujita N."/>
            <person name="Harayama S."/>
        </authorList>
    </citation>
    <scope>NUCLEOTIDE SEQUENCE [LARGE SCALE GENOMIC DNA]</scope>
    <source>
        <strain>PR4 / NBRC 100887</strain>
    </source>
</reference>
<feature type="chain" id="PRO_1000213304" description="Phosphoribosyl-AMP cyclohydrolase">
    <location>
        <begin position="1"/>
        <end position="115"/>
    </location>
</feature>
<feature type="binding site" evidence="1">
    <location>
        <position position="80"/>
    </location>
    <ligand>
        <name>Mg(2+)</name>
        <dbReference type="ChEBI" id="CHEBI:18420"/>
    </ligand>
</feature>
<feature type="binding site" evidence="1">
    <location>
        <position position="81"/>
    </location>
    <ligand>
        <name>Zn(2+)</name>
        <dbReference type="ChEBI" id="CHEBI:29105"/>
        <note>ligand shared between dimeric partners</note>
    </ligand>
</feature>
<feature type="binding site" evidence="1">
    <location>
        <position position="82"/>
    </location>
    <ligand>
        <name>Mg(2+)</name>
        <dbReference type="ChEBI" id="CHEBI:18420"/>
    </ligand>
</feature>
<feature type="binding site" evidence="1">
    <location>
        <position position="84"/>
    </location>
    <ligand>
        <name>Mg(2+)</name>
        <dbReference type="ChEBI" id="CHEBI:18420"/>
    </ligand>
</feature>
<feature type="binding site" evidence="1">
    <location>
        <position position="97"/>
    </location>
    <ligand>
        <name>Zn(2+)</name>
        <dbReference type="ChEBI" id="CHEBI:29105"/>
        <note>ligand shared between dimeric partners</note>
    </ligand>
</feature>
<feature type="binding site" evidence="1">
    <location>
        <position position="104"/>
    </location>
    <ligand>
        <name>Zn(2+)</name>
        <dbReference type="ChEBI" id="CHEBI:29105"/>
        <note>ligand shared between dimeric partners</note>
    </ligand>
</feature>
<sequence>MSLDPAIAAKLKRNDAGLFSAVAQEKSTGDVLMVAWMDDEALARTLETRKGTYYSRSRQQYWVKGETSGHTQYVHEVRLDCDGDSVLLIVDQEGAACHTGTHTCFDTDVLLAAEQ</sequence>